<accession>A0PTS1</accession>
<sequence>MTVTVEPSITTGPIAGSSKAYREVAGPDGVTLRVPLRRVHLSTGADFDLYDTSGPYTDPNAVIDLAVGLPARPGLVRDRGTQLQRARAGEITAEMAFIAAREGMSAELVRDEVALGRAVIPANHNHPESEPMVIGKAFAVKVNANIGNSAVTSSIAEEVDKMVWATRWGADTIMDLSTGKNIHETREWILRNSPVPVGTVPIYQALEKVKGDPTELTWELYRDTVIEQCEQGVDYMTVHAGVLLRYVPLTAKRVTGIVSRGGSIMAAWCLAHHRESFLYTNFEELCDILARYDVTFSLGDGLRPGSIADANDAAQFAELRTLGELTKIAKAHGVQVMIEGPGHVPMHKIVENVRLEEELCEEAPFYTLGPLATDIAPAYDHITSAIGAAIIAQAGTAMLCYVTPKEHLGLPDRKDVKDGVIAYKIAAHAGDLAKGHPHAQERDNALSQARFEFRWNDQFALSLDPDTAREYHDETLPAEPAKTAHFCSMCGPKFCSMRITRDVRDYAAKHGLDSEEAIEAALEAGMAEKSAEFADHGNRVYLPITQ</sequence>
<dbReference type="EC" id="4.1.99.17" evidence="1"/>
<dbReference type="EMBL" id="CP000325">
    <property type="protein sequence ID" value="ABL05740.1"/>
    <property type="molecule type" value="Genomic_DNA"/>
</dbReference>
<dbReference type="RefSeq" id="WP_011741346.1">
    <property type="nucleotide sequence ID" value="NC_008611.1"/>
</dbReference>
<dbReference type="SMR" id="A0PTS1"/>
<dbReference type="KEGG" id="mul:MUL_3600"/>
<dbReference type="eggNOG" id="COG0422">
    <property type="taxonomic scope" value="Bacteria"/>
</dbReference>
<dbReference type="HOGENOM" id="CLU_013181_2_1_11"/>
<dbReference type="UniPathway" id="UPA00060"/>
<dbReference type="Proteomes" id="UP000000765">
    <property type="component" value="Chromosome"/>
</dbReference>
<dbReference type="GO" id="GO:0005829">
    <property type="term" value="C:cytosol"/>
    <property type="evidence" value="ECO:0007669"/>
    <property type="project" value="TreeGrafter"/>
</dbReference>
<dbReference type="GO" id="GO:0051539">
    <property type="term" value="F:4 iron, 4 sulfur cluster binding"/>
    <property type="evidence" value="ECO:0007669"/>
    <property type="project" value="UniProtKB-KW"/>
</dbReference>
<dbReference type="GO" id="GO:0016830">
    <property type="term" value="F:carbon-carbon lyase activity"/>
    <property type="evidence" value="ECO:0007669"/>
    <property type="project" value="InterPro"/>
</dbReference>
<dbReference type="GO" id="GO:0008270">
    <property type="term" value="F:zinc ion binding"/>
    <property type="evidence" value="ECO:0007669"/>
    <property type="project" value="UniProtKB-UniRule"/>
</dbReference>
<dbReference type="GO" id="GO:0009228">
    <property type="term" value="P:thiamine biosynthetic process"/>
    <property type="evidence" value="ECO:0007669"/>
    <property type="project" value="UniProtKB-KW"/>
</dbReference>
<dbReference type="GO" id="GO:0009229">
    <property type="term" value="P:thiamine diphosphate biosynthetic process"/>
    <property type="evidence" value="ECO:0007669"/>
    <property type="project" value="UniProtKB-UniRule"/>
</dbReference>
<dbReference type="FunFam" id="3.20.20.540:FF:000001">
    <property type="entry name" value="Phosphomethylpyrimidine synthase"/>
    <property type="match status" value="1"/>
</dbReference>
<dbReference type="Gene3D" id="6.10.250.620">
    <property type="match status" value="1"/>
</dbReference>
<dbReference type="Gene3D" id="3.20.20.540">
    <property type="entry name" value="Radical SAM ThiC family, central domain"/>
    <property type="match status" value="1"/>
</dbReference>
<dbReference type="HAMAP" id="MF_00089">
    <property type="entry name" value="ThiC"/>
    <property type="match status" value="1"/>
</dbReference>
<dbReference type="InterPro" id="IPR037509">
    <property type="entry name" value="ThiC"/>
</dbReference>
<dbReference type="InterPro" id="IPR025747">
    <property type="entry name" value="ThiC-associated_dom"/>
</dbReference>
<dbReference type="InterPro" id="IPR038521">
    <property type="entry name" value="ThiC/Bza_core_dom"/>
</dbReference>
<dbReference type="InterPro" id="IPR002817">
    <property type="entry name" value="ThiC/BzaA/B"/>
</dbReference>
<dbReference type="NCBIfam" id="NF006763">
    <property type="entry name" value="PRK09284.1"/>
    <property type="match status" value="1"/>
</dbReference>
<dbReference type="NCBIfam" id="NF009895">
    <property type="entry name" value="PRK13352.1"/>
    <property type="match status" value="1"/>
</dbReference>
<dbReference type="NCBIfam" id="TIGR00190">
    <property type="entry name" value="thiC"/>
    <property type="match status" value="1"/>
</dbReference>
<dbReference type="PANTHER" id="PTHR30557:SF1">
    <property type="entry name" value="PHOSPHOMETHYLPYRIMIDINE SYNTHASE, CHLOROPLASTIC"/>
    <property type="match status" value="1"/>
</dbReference>
<dbReference type="PANTHER" id="PTHR30557">
    <property type="entry name" value="THIAMINE BIOSYNTHESIS PROTEIN THIC"/>
    <property type="match status" value="1"/>
</dbReference>
<dbReference type="Pfam" id="PF13667">
    <property type="entry name" value="ThiC-associated"/>
    <property type="match status" value="1"/>
</dbReference>
<dbReference type="Pfam" id="PF01964">
    <property type="entry name" value="ThiC_Rad_SAM"/>
    <property type="match status" value="1"/>
</dbReference>
<dbReference type="SFLD" id="SFLDF00407">
    <property type="entry name" value="phosphomethylpyrimidine_syntha"/>
    <property type="match status" value="1"/>
</dbReference>
<dbReference type="SFLD" id="SFLDG01114">
    <property type="entry name" value="phosphomethylpyrimidine_syntha"/>
    <property type="match status" value="1"/>
</dbReference>
<dbReference type="SFLD" id="SFLDS00113">
    <property type="entry name" value="Radical_SAM_Phosphomethylpyrim"/>
    <property type="match status" value="1"/>
</dbReference>
<name>THIC_MYCUA</name>
<organism>
    <name type="scientific">Mycobacterium ulcerans (strain Agy99)</name>
    <dbReference type="NCBI Taxonomy" id="362242"/>
    <lineage>
        <taxon>Bacteria</taxon>
        <taxon>Bacillati</taxon>
        <taxon>Actinomycetota</taxon>
        <taxon>Actinomycetes</taxon>
        <taxon>Mycobacteriales</taxon>
        <taxon>Mycobacteriaceae</taxon>
        <taxon>Mycobacterium</taxon>
        <taxon>Mycobacterium ulcerans group</taxon>
    </lineage>
</organism>
<feature type="chain" id="PRO_1000004779" description="Phosphomethylpyrimidine synthase">
    <location>
        <begin position="1"/>
        <end position="546"/>
    </location>
</feature>
<feature type="binding site" evidence="1">
    <location>
        <position position="145"/>
    </location>
    <ligand>
        <name>substrate</name>
    </ligand>
</feature>
<feature type="binding site" evidence="1">
    <location>
        <position position="174"/>
    </location>
    <ligand>
        <name>substrate</name>
    </ligand>
</feature>
<feature type="binding site" evidence="1">
    <location>
        <position position="203"/>
    </location>
    <ligand>
        <name>substrate</name>
    </ligand>
</feature>
<feature type="binding site" evidence="1">
    <location>
        <position position="239"/>
    </location>
    <ligand>
        <name>substrate</name>
    </ligand>
</feature>
<feature type="binding site" evidence="1">
    <location>
        <begin position="259"/>
        <end position="261"/>
    </location>
    <ligand>
        <name>substrate</name>
    </ligand>
</feature>
<feature type="binding site" evidence="1">
    <location>
        <begin position="300"/>
        <end position="303"/>
    </location>
    <ligand>
        <name>substrate</name>
    </ligand>
</feature>
<feature type="binding site" evidence="1">
    <location>
        <position position="339"/>
    </location>
    <ligand>
        <name>substrate</name>
    </ligand>
</feature>
<feature type="binding site" evidence="1">
    <location>
        <position position="343"/>
    </location>
    <ligand>
        <name>Zn(2+)</name>
        <dbReference type="ChEBI" id="CHEBI:29105"/>
    </ligand>
</feature>
<feature type="binding site" evidence="1">
    <location>
        <position position="366"/>
    </location>
    <ligand>
        <name>substrate</name>
    </ligand>
</feature>
<feature type="binding site" evidence="1">
    <location>
        <position position="407"/>
    </location>
    <ligand>
        <name>Zn(2+)</name>
        <dbReference type="ChEBI" id="CHEBI:29105"/>
    </ligand>
</feature>
<feature type="binding site" evidence="1">
    <location>
        <position position="487"/>
    </location>
    <ligand>
        <name>[4Fe-4S] cluster</name>
        <dbReference type="ChEBI" id="CHEBI:49883"/>
        <note>4Fe-4S-S-AdoMet</note>
    </ligand>
</feature>
<feature type="binding site" evidence="1">
    <location>
        <position position="490"/>
    </location>
    <ligand>
        <name>[4Fe-4S] cluster</name>
        <dbReference type="ChEBI" id="CHEBI:49883"/>
        <note>4Fe-4S-S-AdoMet</note>
    </ligand>
</feature>
<feature type="binding site" evidence="1">
    <location>
        <position position="495"/>
    </location>
    <ligand>
        <name>[4Fe-4S] cluster</name>
        <dbReference type="ChEBI" id="CHEBI:49883"/>
        <note>4Fe-4S-S-AdoMet</note>
    </ligand>
</feature>
<proteinExistence type="inferred from homology"/>
<gene>
    <name evidence="1" type="primary">thiC</name>
    <name type="ordered locus">MUL_3600</name>
</gene>
<evidence type="ECO:0000255" key="1">
    <source>
        <dbReference type="HAMAP-Rule" id="MF_00089"/>
    </source>
</evidence>
<protein>
    <recommendedName>
        <fullName evidence="1">Phosphomethylpyrimidine synthase</fullName>
        <ecNumber evidence="1">4.1.99.17</ecNumber>
    </recommendedName>
    <alternativeName>
        <fullName evidence="1">Hydroxymethylpyrimidine phosphate synthase</fullName>
        <shortName evidence="1">HMP-P synthase</shortName>
        <shortName evidence="1">HMP-phosphate synthase</shortName>
        <shortName evidence="1">HMPP synthase</shortName>
    </alternativeName>
    <alternativeName>
        <fullName evidence="1">Thiamine biosynthesis protein ThiC</fullName>
    </alternativeName>
</protein>
<keyword id="KW-0004">4Fe-4S</keyword>
<keyword id="KW-0408">Iron</keyword>
<keyword id="KW-0411">Iron-sulfur</keyword>
<keyword id="KW-0456">Lyase</keyword>
<keyword id="KW-0479">Metal-binding</keyword>
<keyword id="KW-0949">S-adenosyl-L-methionine</keyword>
<keyword id="KW-0784">Thiamine biosynthesis</keyword>
<keyword id="KW-0862">Zinc</keyword>
<reference key="1">
    <citation type="journal article" date="2007" name="Genome Res.">
        <title>Reductive evolution and niche adaptation inferred from the genome of Mycobacterium ulcerans, the causative agent of Buruli ulcer.</title>
        <authorList>
            <person name="Stinear T.P."/>
            <person name="Seemann T."/>
            <person name="Pidot S."/>
            <person name="Frigui W."/>
            <person name="Reysset G."/>
            <person name="Garnier T."/>
            <person name="Meurice G."/>
            <person name="Simon D."/>
            <person name="Bouchier C."/>
            <person name="Ma L."/>
            <person name="Tichit M."/>
            <person name="Porter J.L."/>
            <person name="Ryan J."/>
            <person name="Johnson P.D.R."/>
            <person name="Davies J.K."/>
            <person name="Jenkin G.A."/>
            <person name="Small P.L.C."/>
            <person name="Jones L.M."/>
            <person name="Tekaia F."/>
            <person name="Laval F."/>
            <person name="Daffe M."/>
            <person name="Parkhill J."/>
            <person name="Cole S.T."/>
        </authorList>
    </citation>
    <scope>NUCLEOTIDE SEQUENCE [LARGE SCALE GENOMIC DNA]</scope>
    <source>
        <strain>Agy99</strain>
    </source>
</reference>
<comment type="function">
    <text evidence="1">Catalyzes the synthesis of the hydroxymethylpyrimidine phosphate (HMP-P) moiety of thiamine from aminoimidazole ribotide (AIR) in a radical S-adenosyl-L-methionine (SAM)-dependent reaction.</text>
</comment>
<comment type="catalytic activity">
    <reaction evidence="1">
        <text>5-amino-1-(5-phospho-beta-D-ribosyl)imidazole + S-adenosyl-L-methionine = 4-amino-2-methyl-5-(phosphooxymethyl)pyrimidine + CO + 5'-deoxyadenosine + formate + L-methionine + 3 H(+)</text>
        <dbReference type="Rhea" id="RHEA:24840"/>
        <dbReference type="ChEBI" id="CHEBI:15378"/>
        <dbReference type="ChEBI" id="CHEBI:15740"/>
        <dbReference type="ChEBI" id="CHEBI:17245"/>
        <dbReference type="ChEBI" id="CHEBI:17319"/>
        <dbReference type="ChEBI" id="CHEBI:57844"/>
        <dbReference type="ChEBI" id="CHEBI:58354"/>
        <dbReference type="ChEBI" id="CHEBI:59789"/>
        <dbReference type="ChEBI" id="CHEBI:137981"/>
        <dbReference type="EC" id="4.1.99.17"/>
    </reaction>
</comment>
<comment type="cofactor">
    <cofactor evidence="1">
        <name>[4Fe-4S] cluster</name>
        <dbReference type="ChEBI" id="CHEBI:49883"/>
    </cofactor>
    <text evidence="1">Binds 1 [4Fe-4S] cluster per subunit. The cluster is coordinated with 3 cysteines and an exchangeable S-adenosyl-L-methionine.</text>
</comment>
<comment type="pathway">
    <text evidence="1">Cofactor biosynthesis; thiamine diphosphate biosynthesis.</text>
</comment>
<comment type="similarity">
    <text evidence="1">Belongs to the ThiC family.</text>
</comment>